<sequence>MYTSNIQVASRYAKSLLKQAIDMGVLDHVYKDALFFKKVGKSHKTLFRVLHNPIIKNETKLAILTSIFQSRIHPLTFHLLKLLSHRKREGILPTIIDTFLEQYYIYRGIKAASVTTTFRLSDDLIRYFKNLAKSLVPCKEVILKEYVNPSIQGGFVLRIEDQQLDNSLATRLHKLKKQYSIAEY</sequence>
<organism>
    <name type="scientific">Amoebophilus asiaticus (strain 5a2)</name>
    <dbReference type="NCBI Taxonomy" id="452471"/>
    <lineage>
        <taxon>Bacteria</taxon>
        <taxon>Pseudomonadati</taxon>
        <taxon>Bacteroidota</taxon>
        <taxon>Cytophagia</taxon>
        <taxon>Cytophagales</taxon>
        <taxon>Amoebophilaceae</taxon>
        <taxon>Candidatus Amoebophilus</taxon>
    </lineage>
</organism>
<gene>
    <name evidence="1" type="primary">atpH</name>
    <name type="ordered locus">Aasi_0064</name>
</gene>
<proteinExistence type="inferred from homology"/>
<dbReference type="EMBL" id="CP001102">
    <property type="protein sequence ID" value="ACE05516.1"/>
    <property type="status" value="ALT_INIT"/>
    <property type="molecule type" value="Genomic_DNA"/>
</dbReference>
<dbReference type="RefSeq" id="WP_012472288.1">
    <property type="nucleotide sequence ID" value="NC_010830.1"/>
</dbReference>
<dbReference type="SMR" id="B3EU97"/>
<dbReference type="STRING" id="452471.Aasi_0064"/>
<dbReference type="KEGG" id="aas:Aasi_0064"/>
<dbReference type="eggNOG" id="COG0712">
    <property type="taxonomic scope" value="Bacteria"/>
</dbReference>
<dbReference type="HOGENOM" id="CLU_085114_4_1_10"/>
<dbReference type="OrthoDB" id="9802471at2"/>
<dbReference type="Proteomes" id="UP000001227">
    <property type="component" value="Chromosome"/>
</dbReference>
<dbReference type="GO" id="GO:0005886">
    <property type="term" value="C:plasma membrane"/>
    <property type="evidence" value="ECO:0007669"/>
    <property type="project" value="UniProtKB-SubCell"/>
</dbReference>
<dbReference type="GO" id="GO:0045259">
    <property type="term" value="C:proton-transporting ATP synthase complex"/>
    <property type="evidence" value="ECO:0007669"/>
    <property type="project" value="UniProtKB-KW"/>
</dbReference>
<dbReference type="GO" id="GO:0046933">
    <property type="term" value="F:proton-transporting ATP synthase activity, rotational mechanism"/>
    <property type="evidence" value="ECO:0007669"/>
    <property type="project" value="UniProtKB-UniRule"/>
</dbReference>
<dbReference type="Gene3D" id="1.10.520.20">
    <property type="entry name" value="N-terminal domain of the delta subunit of the F1F0-ATP synthase"/>
    <property type="match status" value="1"/>
</dbReference>
<dbReference type="HAMAP" id="MF_01416">
    <property type="entry name" value="ATP_synth_delta_bact"/>
    <property type="match status" value="1"/>
</dbReference>
<dbReference type="InterPro" id="IPR026015">
    <property type="entry name" value="ATP_synth_OSCP/delta_N_sf"/>
</dbReference>
<dbReference type="InterPro" id="IPR020781">
    <property type="entry name" value="ATPase_OSCP/d_CS"/>
</dbReference>
<dbReference type="InterPro" id="IPR000711">
    <property type="entry name" value="ATPase_OSCP/dsu"/>
</dbReference>
<dbReference type="NCBIfam" id="TIGR01145">
    <property type="entry name" value="ATP_synt_delta"/>
    <property type="match status" value="1"/>
</dbReference>
<dbReference type="PANTHER" id="PTHR11910">
    <property type="entry name" value="ATP SYNTHASE DELTA CHAIN"/>
    <property type="match status" value="1"/>
</dbReference>
<dbReference type="Pfam" id="PF00213">
    <property type="entry name" value="OSCP"/>
    <property type="match status" value="1"/>
</dbReference>
<dbReference type="PRINTS" id="PR00125">
    <property type="entry name" value="ATPASEDELTA"/>
</dbReference>
<dbReference type="SUPFAM" id="SSF47928">
    <property type="entry name" value="N-terminal domain of the delta subunit of the F1F0-ATP synthase"/>
    <property type="match status" value="1"/>
</dbReference>
<dbReference type="PROSITE" id="PS00389">
    <property type="entry name" value="ATPASE_DELTA"/>
    <property type="match status" value="1"/>
</dbReference>
<protein>
    <recommendedName>
        <fullName evidence="1">ATP synthase subunit delta</fullName>
    </recommendedName>
    <alternativeName>
        <fullName evidence="1">ATP synthase F(1) sector subunit delta</fullName>
    </alternativeName>
    <alternativeName>
        <fullName evidence="1">F-type ATPase subunit delta</fullName>
        <shortName evidence="1">F-ATPase subunit delta</shortName>
    </alternativeName>
</protein>
<keyword id="KW-0066">ATP synthesis</keyword>
<keyword id="KW-1003">Cell membrane</keyword>
<keyword id="KW-0139">CF(1)</keyword>
<keyword id="KW-0375">Hydrogen ion transport</keyword>
<keyword id="KW-0406">Ion transport</keyword>
<keyword id="KW-0472">Membrane</keyword>
<keyword id="KW-1185">Reference proteome</keyword>
<keyword id="KW-0813">Transport</keyword>
<accession>B3EU97</accession>
<comment type="function">
    <text evidence="1">F(1)F(0) ATP synthase produces ATP from ADP in the presence of a proton or sodium gradient. F-type ATPases consist of two structural domains, F(1) containing the extramembraneous catalytic core and F(0) containing the membrane proton channel, linked together by a central stalk and a peripheral stalk. During catalysis, ATP synthesis in the catalytic domain of F(1) is coupled via a rotary mechanism of the central stalk subunits to proton translocation.</text>
</comment>
<comment type="function">
    <text evidence="1">This protein is part of the stalk that links CF(0) to CF(1). It either transmits conformational changes from CF(0) to CF(1) or is implicated in proton conduction.</text>
</comment>
<comment type="subunit">
    <text evidence="1">F-type ATPases have 2 components, F(1) - the catalytic core - and F(0) - the membrane proton channel. F(1) has five subunits: alpha(3), beta(3), gamma(1), delta(1), epsilon(1). F(0) has three main subunits: a(1), b(2) and c(10-14). The alpha and beta chains form an alternating ring which encloses part of the gamma chain. F(1) is attached to F(0) by a central stalk formed by the gamma and epsilon chains, while a peripheral stalk is formed by the delta and b chains.</text>
</comment>
<comment type="subcellular location">
    <subcellularLocation>
        <location evidence="1">Cell membrane</location>
        <topology evidence="1">Peripheral membrane protein</topology>
    </subcellularLocation>
</comment>
<comment type="similarity">
    <text evidence="1">Belongs to the ATPase delta chain family.</text>
</comment>
<comment type="sequence caution" evidence="2">
    <conflict type="erroneous initiation">
        <sequence resource="EMBL-CDS" id="ACE05516"/>
    </conflict>
</comment>
<feature type="chain" id="PRO_0000370878" description="ATP synthase subunit delta">
    <location>
        <begin position="1"/>
        <end position="184"/>
    </location>
</feature>
<reference key="1">
    <citation type="journal article" date="2010" name="J. Bacteriol.">
        <title>The genome of the amoeba symbiont 'Candidatus Amoebophilus asiaticus' reveals common mechanisms for host cell interaction among amoeba-associated bacteria.</title>
        <authorList>
            <person name="Schmitz-Esser S."/>
            <person name="Tischler P."/>
            <person name="Arnold R."/>
            <person name="Montanaro J."/>
            <person name="Wagner M."/>
            <person name="Rattei T."/>
            <person name="Horn M."/>
        </authorList>
    </citation>
    <scope>NUCLEOTIDE SEQUENCE [LARGE SCALE GENOMIC DNA]</scope>
    <source>
        <strain>5a2</strain>
    </source>
</reference>
<evidence type="ECO:0000255" key="1">
    <source>
        <dbReference type="HAMAP-Rule" id="MF_01416"/>
    </source>
</evidence>
<evidence type="ECO:0000305" key="2"/>
<name>ATPD_AMOA5</name>